<dbReference type="EMBL" id="EU926092">
    <property type="protein sequence ID" value="ACI41424.1"/>
    <property type="molecule type" value="mRNA"/>
</dbReference>
<dbReference type="EMBL" id="FM864096">
    <property type="protein sequence ID" value="CAS03693.1"/>
    <property type="molecule type" value="mRNA"/>
</dbReference>
<dbReference type="SMR" id="B6DD08"/>
<dbReference type="ArachnoServer" id="AS001030">
    <property type="toxin name" value="U11-lycotoxin-Ls1b"/>
</dbReference>
<dbReference type="GO" id="GO:0005576">
    <property type="term" value="C:extracellular region"/>
    <property type="evidence" value="ECO:0007669"/>
    <property type="project" value="UniProtKB-SubCell"/>
</dbReference>
<dbReference type="GO" id="GO:0090729">
    <property type="term" value="F:toxin activity"/>
    <property type="evidence" value="ECO:0007669"/>
    <property type="project" value="UniProtKB-KW"/>
</dbReference>
<dbReference type="InterPro" id="IPR019553">
    <property type="entry name" value="Spider_toxin_CSTX_knottin"/>
</dbReference>
<dbReference type="Pfam" id="PF10530">
    <property type="entry name" value="Toxin_35"/>
    <property type="match status" value="1"/>
</dbReference>
<evidence type="ECO:0000250" key="1"/>
<evidence type="ECO:0000255" key="2"/>
<evidence type="ECO:0000305" key="3"/>
<proteinExistence type="evidence at transcript level"/>
<comment type="subcellular location">
    <subcellularLocation>
        <location evidence="1">Secreted</location>
    </subcellularLocation>
</comment>
<comment type="tissue specificity">
    <text>Expressed by the venom gland.</text>
</comment>
<comment type="PTM">
    <text evidence="1">Contains 4 disulfide bonds.</text>
</comment>
<comment type="similarity">
    <text evidence="3">Belongs to the neurotoxin 19 (CSTX) family. 10 (U11-Lctx) subfamily.</text>
</comment>
<protein>
    <recommendedName>
        <fullName>U11-lycotoxin-Ls1b</fullName>
    </recommendedName>
    <alternativeName>
        <fullName>Toxin-like structure LSTX-J6</fullName>
    </alternativeName>
</protein>
<feature type="signal peptide" evidence="2">
    <location>
        <begin position="1"/>
        <end position="20"/>
    </location>
</feature>
<feature type="propeptide" id="PRO_0000401837" evidence="1">
    <location>
        <begin position="21"/>
        <end position="26"/>
    </location>
</feature>
<feature type="chain" id="PRO_0000401838" description="U11-lycotoxin-Ls1b">
    <location>
        <begin position="27"/>
        <end position="77"/>
    </location>
</feature>
<accession>B6DD08</accession>
<keyword id="KW-1015">Disulfide bond</keyword>
<keyword id="KW-0964">Secreted</keyword>
<keyword id="KW-0732">Signal</keyword>
<keyword id="KW-0800">Toxin</keyword>
<name>TXBJ6_LYCSI</name>
<sequence length="77" mass="8547">MKLIIFTGLALFAIVSLIEAEEESGRGCILLYGECTKATGSCCSNLICDCYRKLKKGVQIARQCFCSEKDVIYKKDI</sequence>
<organism>
    <name type="scientific">Lycosa singoriensis</name>
    <name type="common">Wolf spider</name>
    <name type="synonym">Aranea singoriensis</name>
    <dbReference type="NCBI Taxonomy" id="434756"/>
    <lineage>
        <taxon>Eukaryota</taxon>
        <taxon>Metazoa</taxon>
        <taxon>Ecdysozoa</taxon>
        <taxon>Arthropoda</taxon>
        <taxon>Chelicerata</taxon>
        <taxon>Arachnida</taxon>
        <taxon>Araneae</taxon>
        <taxon>Araneomorphae</taxon>
        <taxon>Entelegynae</taxon>
        <taxon>Lycosoidea</taxon>
        <taxon>Lycosidae</taxon>
        <taxon>Lycosa</taxon>
    </lineage>
</organism>
<reference key="1">
    <citation type="journal article" date="2010" name="Zoology">
        <title>Transcriptome analysis of the venom glands of the Chinese wolf spider Lycosa singoriensis.</title>
        <authorList>
            <person name="Zhang Y."/>
            <person name="Chen J."/>
            <person name="Tang X."/>
            <person name="Wang F."/>
            <person name="Jiang L."/>
            <person name="Xiong X."/>
            <person name="Wang M."/>
            <person name="Rong M."/>
            <person name="Liu Z."/>
            <person name="Liang S."/>
        </authorList>
    </citation>
    <scope>NUCLEOTIDE SEQUENCE [LARGE SCALE MRNA]</scope>
    <source>
        <tissue>Venom gland</tissue>
    </source>
</reference>